<keyword id="KW-1003">Cell membrane</keyword>
<keyword id="KW-0285">Flavoprotein</keyword>
<keyword id="KW-0288">FMN</keyword>
<keyword id="KW-0472">Membrane</keyword>
<keyword id="KW-0560">Oxidoreductase</keyword>
<keyword id="KW-0665">Pyrimidine biosynthesis</keyword>
<keyword id="KW-1185">Reference proteome</keyword>
<accession>Q8ZG91</accession>
<accession>Q0WH00</accession>
<dbReference type="EC" id="1.3.5.2" evidence="1"/>
<dbReference type="EMBL" id="AL590842">
    <property type="protein sequence ID" value="CAL20067.1"/>
    <property type="molecule type" value="Genomic_DNA"/>
</dbReference>
<dbReference type="EMBL" id="AE009952">
    <property type="protein sequence ID" value="AAM86306.1"/>
    <property type="molecule type" value="Genomic_DNA"/>
</dbReference>
<dbReference type="EMBL" id="AE017042">
    <property type="protein sequence ID" value="AAS61421.1"/>
    <property type="status" value="ALT_INIT"/>
    <property type="molecule type" value="Genomic_DNA"/>
</dbReference>
<dbReference type="PIR" id="AI0172">
    <property type="entry name" value="AI0172"/>
</dbReference>
<dbReference type="RefSeq" id="WP_002211296.1">
    <property type="nucleotide sequence ID" value="NZ_WUCM01000086.1"/>
</dbReference>
<dbReference type="RefSeq" id="YP_002346438.1">
    <property type="nucleotide sequence ID" value="NC_003143.1"/>
</dbReference>
<dbReference type="SMR" id="Q8ZG91"/>
<dbReference type="STRING" id="214092.YPO1415"/>
<dbReference type="PaxDb" id="214092-YPO1415"/>
<dbReference type="EnsemblBacteria" id="AAS61421">
    <property type="protein sequence ID" value="AAS61421"/>
    <property type="gene ID" value="YP_1178"/>
</dbReference>
<dbReference type="GeneID" id="57977211"/>
<dbReference type="KEGG" id="ype:YPO1415"/>
<dbReference type="KEGG" id="ypk:y2755"/>
<dbReference type="KEGG" id="ypm:YP_1178"/>
<dbReference type="PATRIC" id="fig|214092.21.peg.1743"/>
<dbReference type="eggNOG" id="COG0167">
    <property type="taxonomic scope" value="Bacteria"/>
</dbReference>
<dbReference type="HOGENOM" id="CLU_013640_2_0_6"/>
<dbReference type="OMA" id="ERIKMGA"/>
<dbReference type="OrthoDB" id="9802377at2"/>
<dbReference type="UniPathway" id="UPA00070">
    <property type="reaction ID" value="UER00946"/>
</dbReference>
<dbReference type="Proteomes" id="UP000000815">
    <property type="component" value="Chromosome"/>
</dbReference>
<dbReference type="Proteomes" id="UP000001019">
    <property type="component" value="Chromosome"/>
</dbReference>
<dbReference type="Proteomes" id="UP000002490">
    <property type="component" value="Chromosome"/>
</dbReference>
<dbReference type="GO" id="GO:0005737">
    <property type="term" value="C:cytoplasm"/>
    <property type="evidence" value="ECO:0007669"/>
    <property type="project" value="InterPro"/>
</dbReference>
<dbReference type="GO" id="GO:0005886">
    <property type="term" value="C:plasma membrane"/>
    <property type="evidence" value="ECO:0007669"/>
    <property type="project" value="UniProtKB-SubCell"/>
</dbReference>
<dbReference type="GO" id="GO:0106430">
    <property type="term" value="F:dihydroorotate dehydrogenase (quinone) activity"/>
    <property type="evidence" value="ECO:0007669"/>
    <property type="project" value="UniProtKB-EC"/>
</dbReference>
<dbReference type="GO" id="GO:0004152">
    <property type="term" value="F:dihydroorotate dehydrogenase activity"/>
    <property type="evidence" value="ECO:0000318"/>
    <property type="project" value="GO_Central"/>
</dbReference>
<dbReference type="GO" id="GO:0006207">
    <property type="term" value="P:'de novo' pyrimidine nucleobase biosynthetic process"/>
    <property type="evidence" value="ECO:0000318"/>
    <property type="project" value="GO_Central"/>
</dbReference>
<dbReference type="GO" id="GO:0044205">
    <property type="term" value="P:'de novo' UMP biosynthetic process"/>
    <property type="evidence" value="ECO:0007669"/>
    <property type="project" value="UniProtKB-UniRule"/>
</dbReference>
<dbReference type="GO" id="GO:0009220">
    <property type="term" value="P:pyrimidine ribonucleotide biosynthetic process"/>
    <property type="evidence" value="ECO:0000318"/>
    <property type="project" value="GO_Central"/>
</dbReference>
<dbReference type="CDD" id="cd04738">
    <property type="entry name" value="DHOD_2_like"/>
    <property type="match status" value="1"/>
</dbReference>
<dbReference type="FunFam" id="3.20.20.70:FF:000028">
    <property type="entry name" value="Dihydroorotate dehydrogenase (quinone)"/>
    <property type="match status" value="1"/>
</dbReference>
<dbReference type="Gene3D" id="3.20.20.70">
    <property type="entry name" value="Aldolase class I"/>
    <property type="match status" value="1"/>
</dbReference>
<dbReference type="HAMAP" id="MF_00225">
    <property type="entry name" value="DHO_dh_type2"/>
    <property type="match status" value="1"/>
</dbReference>
<dbReference type="InterPro" id="IPR013785">
    <property type="entry name" value="Aldolase_TIM"/>
</dbReference>
<dbReference type="InterPro" id="IPR050074">
    <property type="entry name" value="DHO_dehydrogenase"/>
</dbReference>
<dbReference type="InterPro" id="IPR012135">
    <property type="entry name" value="Dihydroorotate_DH_1_2"/>
</dbReference>
<dbReference type="InterPro" id="IPR005719">
    <property type="entry name" value="Dihydroorotate_DH_2"/>
</dbReference>
<dbReference type="InterPro" id="IPR005720">
    <property type="entry name" value="Dihydroorotate_DH_cat"/>
</dbReference>
<dbReference type="InterPro" id="IPR001295">
    <property type="entry name" value="Dihydroorotate_DH_CS"/>
</dbReference>
<dbReference type="NCBIfam" id="NF003644">
    <property type="entry name" value="PRK05286.1-1"/>
    <property type="match status" value="1"/>
</dbReference>
<dbReference type="NCBIfam" id="NF003645">
    <property type="entry name" value="PRK05286.1-2"/>
    <property type="match status" value="1"/>
</dbReference>
<dbReference type="NCBIfam" id="NF003646">
    <property type="entry name" value="PRK05286.1-4"/>
    <property type="match status" value="1"/>
</dbReference>
<dbReference type="NCBIfam" id="NF003652">
    <property type="entry name" value="PRK05286.2-5"/>
    <property type="match status" value="1"/>
</dbReference>
<dbReference type="NCBIfam" id="TIGR01036">
    <property type="entry name" value="pyrD_sub2"/>
    <property type="match status" value="1"/>
</dbReference>
<dbReference type="PANTHER" id="PTHR48109:SF4">
    <property type="entry name" value="DIHYDROOROTATE DEHYDROGENASE (QUINONE), MITOCHONDRIAL"/>
    <property type="match status" value="1"/>
</dbReference>
<dbReference type="PANTHER" id="PTHR48109">
    <property type="entry name" value="DIHYDROOROTATE DEHYDROGENASE (QUINONE), MITOCHONDRIAL-RELATED"/>
    <property type="match status" value="1"/>
</dbReference>
<dbReference type="Pfam" id="PF01180">
    <property type="entry name" value="DHO_dh"/>
    <property type="match status" value="1"/>
</dbReference>
<dbReference type="PIRSF" id="PIRSF000164">
    <property type="entry name" value="DHO_oxidase"/>
    <property type="match status" value="1"/>
</dbReference>
<dbReference type="SUPFAM" id="SSF51395">
    <property type="entry name" value="FMN-linked oxidoreductases"/>
    <property type="match status" value="1"/>
</dbReference>
<dbReference type="PROSITE" id="PS00911">
    <property type="entry name" value="DHODEHASE_1"/>
    <property type="match status" value="1"/>
</dbReference>
<dbReference type="PROSITE" id="PS00912">
    <property type="entry name" value="DHODEHASE_2"/>
    <property type="match status" value="1"/>
</dbReference>
<gene>
    <name evidence="1" type="primary">pyrD</name>
    <name type="ordered locus">YPO1415</name>
    <name type="ordered locus">y2755</name>
    <name type="ordered locus">YP_1178</name>
</gene>
<comment type="function">
    <text evidence="1">Catalyzes the conversion of dihydroorotate to orotate with quinone as electron acceptor.</text>
</comment>
<comment type="catalytic activity">
    <reaction evidence="1">
        <text>(S)-dihydroorotate + a quinone = orotate + a quinol</text>
        <dbReference type="Rhea" id="RHEA:30187"/>
        <dbReference type="ChEBI" id="CHEBI:24646"/>
        <dbReference type="ChEBI" id="CHEBI:30839"/>
        <dbReference type="ChEBI" id="CHEBI:30864"/>
        <dbReference type="ChEBI" id="CHEBI:132124"/>
        <dbReference type="EC" id="1.3.5.2"/>
    </reaction>
</comment>
<comment type="cofactor">
    <cofactor evidence="1">
        <name>FMN</name>
        <dbReference type="ChEBI" id="CHEBI:58210"/>
    </cofactor>
    <text evidence="1">Binds 1 FMN per subunit.</text>
</comment>
<comment type="pathway">
    <text evidence="1">Pyrimidine metabolism; UMP biosynthesis via de novo pathway; orotate from (S)-dihydroorotate (quinone route): step 1/1.</text>
</comment>
<comment type="subunit">
    <text evidence="1">Monomer.</text>
</comment>
<comment type="subcellular location">
    <subcellularLocation>
        <location evidence="1">Cell membrane</location>
        <topology evidence="1">Peripheral membrane protein</topology>
    </subcellularLocation>
</comment>
<comment type="similarity">
    <text evidence="1">Belongs to the dihydroorotate dehydrogenase family. Type 2 subfamily.</text>
</comment>
<comment type="sequence caution" evidence="2">
    <conflict type="erroneous initiation">
        <sequence resource="EMBL-CDS" id="AAS61421"/>
    </conflict>
</comment>
<proteinExistence type="inferred from homology"/>
<sequence length="336" mass="36832">MYYPLVRKALFQLDPERAHELTFRQLKRVSGTPLEFLVRQSVPTKPVSCMGLSFKNPVGLAAGLDKDGECIDALGAMGFGFIEVGTVTPRPQVGNDKPRLFRIVEAEGLINRMGFNNHGVDNLIENVKKSHFGGILGINIGKNKDTPVEQGKEDYLICMDKIYPYAGYIAINISSPNTPGLRSLQYGEALDDLLAAIKDKQTELHQRHHKYVPVAVKIAPDLTEEELIQIADSLVRHNIDGVIATNTTLDRSLIQGLNYCEQAGGLSGRPLQLRSTEVIHRLSQELKGRLPIIGVGGIDSVTAAREKMAAGASLIQIYSGFIFRGPGLIKNIVTHI</sequence>
<feature type="chain" id="PRO_0000148494" description="Dihydroorotate dehydrogenase (quinone)">
    <location>
        <begin position="1"/>
        <end position="336"/>
    </location>
</feature>
<feature type="active site" description="Nucleophile" evidence="1">
    <location>
        <position position="175"/>
    </location>
</feature>
<feature type="binding site" evidence="1">
    <location>
        <begin position="62"/>
        <end position="66"/>
    </location>
    <ligand>
        <name>FMN</name>
        <dbReference type="ChEBI" id="CHEBI:58210"/>
    </ligand>
</feature>
<feature type="binding site" evidence="1">
    <location>
        <position position="66"/>
    </location>
    <ligand>
        <name>substrate</name>
    </ligand>
</feature>
<feature type="binding site" evidence="1">
    <location>
        <position position="86"/>
    </location>
    <ligand>
        <name>FMN</name>
        <dbReference type="ChEBI" id="CHEBI:58210"/>
    </ligand>
</feature>
<feature type="binding site" evidence="1">
    <location>
        <begin position="111"/>
        <end position="115"/>
    </location>
    <ligand>
        <name>substrate</name>
    </ligand>
</feature>
<feature type="binding site" evidence="1">
    <location>
        <position position="139"/>
    </location>
    <ligand>
        <name>FMN</name>
        <dbReference type="ChEBI" id="CHEBI:58210"/>
    </ligand>
</feature>
<feature type="binding site" evidence="1">
    <location>
        <position position="172"/>
    </location>
    <ligand>
        <name>FMN</name>
        <dbReference type="ChEBI" id="CHEBI:58210"/>
    </ligand>
</feature>
<feature type="binding site" evidence="1">
    <location>
        <position position="172"/>
    </location>
    <ligand>
        <name>substrate</name>
    </ligand>
</feature>
<feature type="binding site" evidence="1">
    <location>
        <position position="177"/>
    </location>
    <ligand>
        <name>substrate</name>
    </ligand>
</feature>
<feature type="binding site" evidence="1">
    <location>
        <position position="217"/>
    </location>
    <ligand>
        <name>FMN</name>
        <dbReference type="ChEBI" id="CHEBI:58210"/>
    </ligand>
</feature>
<feature type="binding site" evidence="1">
    <location>
        <position position="245"/>
    </location>
    <ligand>
        <name>FMN</name>
        <dbReference type="ChEBI" id="CHEBI:58210"/>
    </ligand>
</feature>
<feature type="binding site" evidence="1">
    <location>
        <begin position="246"/>
        <end position="247"/>
    </location>
    <ligand>
        <name>substrate</name>
    </ligand>
</feature>
<feature type="binding site" evidence="1">
    <location>
        <position position="268"/>
    </location>
    <ligand>
        <name>FMN</name>
        <dbReference type="ChEBI" id="CHEBI:58210"/>
    </ligand>
</feature>
<feature type="binding site" evidence="1">
    <location>
        <position position="297"/>
    </location>
    <ligand>
        <name>FMN</name>
        <dbReference type="ChEBI" id="CHEBI:58210"/>
    </ligand>
</feature>
<feature type="binding site" evidence="1">
    <location>
        <begin position="318"/>
        <end position="319"/>
    </location>
    <ligand>
        <name>FMN</name>
        <dbReference type="ChEBI" id="CHEBI:58210"/>
    </ligand>
</feature>
<protein>
    <recommendedName>
        <fullName evidence="1">Dihydroorotate dehydrogenase (quinone)</fullName>
        <ecNumber evidence="1">1.3.5.2</ecNumber>
    </recommendedName>
    <alternativeName>
        <fullName evidence="1">DHOdehase</fullName>
        <shortName evidence="1">DHOD</shortName>
        <shortName evidence="1">DHODase</shortName>
    </alternativeName>
    <alternativeName>
        <fullName evidence="1">Dihydroorotate oxidase</fullName>
    </alternativeName>
</protein>
<organism>
    <name type="scientific">Yersinia pestis</name>
    <dbReference type="NCBI Taxonomy" id="632"/>
    <lineage>
        <taxon>Bacteria</taxon>
        <taxon>Pseudomonadati</taxon>
        <taxon>Pseudomonadota</taxon>
        <taxon>Gammaproteobacteria</taxon>
        <taxon>Enterobacterales</taxon>
        <taxon>Yersiniaceae</taxon>
        <taxon>Yersinia</taxon>
    </lineage>
</organism>
<reference key="1">
    <citation type="journal article" date="2001" name="Nature">
        <title>Genome sequence of Yersinia pestis, the causative agent of plague.</title>
        <authorList>
            <person name="Parkhill J."/>
            <person name="Wren B.W."/>
            <person name="Thomson N.R."/>
            <person name="Titball R.W."/>
            <person name="Holden M.T.G."/>
            <person name="Prentice M.B."/>
            <person name="Sebaihia M."/>
            <person name="James K.D."/>
            <person name="Churcher C.M."/>
            <person name="Mungall K.L."/>
            <person name="Baker S."/>
            <person name="Basham D."/>
            <person name="Bentley S.D."/>
            <person name="Brooks K."/>
            <person name="Cerdeno-Tarraga A.-M."/>
            <person name="Chillingworth T."/>
            <person name="Cronin A."/>
            <person name="Davies R.M."/>
            <person name="Davis P."/>
            <person name="Dougan G."/>
            <person name="Feltwell T."/>
            <person name="Hamlin N."/>
            <person name="Holroyd S."/>
            <person name="Jagels K."/>
            <person name="Karlyshev A.V."/>
            <person name="Leather S."/>
            <person name="Moule S."/>
            <person name="Oyston P.C.F."/>
            <person name="Quail M.A."/>
            <person name="Rutherford K.M."/>
            <person name="Simmonds M."/>
            <person name="Skelton J."/>
            <person name="Stevens K."/>
            <person name="Whitehead S."/>
            <person name="Barrell B.G."/>
        </authorList>
    </citation>
    <scope>NUCLEOTIDE SEQUENCE [LARGE SCALE GENOMIC DNA]</scope>
    <source>
        <strain>CO-92 / Biovar Orientalis</strain>
    </source>
</reference>
<reference key="2">
    <citation type="journal article" date="2002" name="J. Bacteriol.">
        <title>Genome sequence of Yersinia pestis KIM.</title>
        <authorList>
            <person name="Deng W."/>
            <person name="Burland V."/>
            <person name="Plunkett G. III"/>
            <person name="Boutin A."/>
            <person name="Mayhew G.F."/>
            <person name="Liss P."/>
            <person name="Perna N.T."/>
            <person name="Rose D.J."/>
            <person name="Mau B."/>
            <person name="Zhou S."/>
            <person name="Schwartz D.C."/>
            <person name="Fetherston J.D."/>
            <person name="Lindler L.E."/>
            <person name="Brubaker R.R."/>
            <person name="Plano G.V."/>
            <person name="Straley S.C."/>
            <person name="McDonough K.A."/>
            <person name="Nilles M.L."/>
            <person name="Matson J.S."/>
            <person name="Blattner F.R."/>
            <person name="Perry R.D."/>
        </authorList>
    </citation>
    <scope>NUCLEOTIDE SEQUENCE [LARGE SCALE GENOMIC DNA]</scope>
    <source>
        <strain>KIM10+ / Biovar Mediaevalis</strain>
    </source>
</reference>
<reference key="3">
    <citation type="journal article" date="2004" name="DNA Res.">
        <title>Complete genome sequence of Yersinia pestis strain 91001, an isolate avirulent to humans.</title>
        <authorList>
            <person name="Song Y."/>
            <person name="Tong Z."/>
            <person name="Wang J."/>
            <person name="Wang L."/>
            <person name="Guo Z."/>
            <person name="Han Y."/>
            <person name="Zhang J."/>
            <person name="Pei D."/>
            <person name="Zhou D."/>
            <person name="Qin H."/>
            <person name="Pang X."/>
            <person name="Han Y."/>
            <person name="Zhai J."/>
            <person name="Li M."/>
            <person name="Cui B."/>
            <person name="Qi Z."/>
            <person name="Jin L."/>
            <person name="Dai R."/>
            <person name="Chen F."/>
            <person name="Li S."/>
            <person name="Ye C."/>
            <person name="Du Z."/>
            <person name="Lin W."/>
            <person name="Wang J."/>
            <person name="Yu J."/>
            <person name="Yang H."/>
            <person name="Wang J."/>
            <person name="Huang P."/>
            <person name="Yang R."/>
        </authorList>
    </citation>
    <scope>NUCLEOTIDE SEQUENCE [LARGE SCALE GENOMIC DNA]</scope>
    <source>
        <strain>91001 / Biovar Mediaevalis</strain>
    </source>
</reference>
<evidence type="ECO:0000255" key="1">
    <source>
        <dbReference type="HAMAP-Rule" id="MF_00225"/>
    </source>
</evidence>
<evidence type="ECO:0000305" key="2"/>
<name>PYRD_YERPE</name>